<accession>P49450</accession>
<accession>D6W544</accession>
<accession>Q53T74</accession>
<accession>Q9BVW2</accession>
<evidence type="ECO:0000250" key="1">
    <source>
        <dbReference type="UniProtKB" id="O35216"/>
    </source>
</evidence>
<evidence type="ECO:0000256" key="2">
    <source>
        <dbReference type="SAM" id="MobiDB-lite"/>
    </source>
</evidence>
<evidence type="ECO:0000269" key="3">
    <source>
    </source>
</evidence>
<evidence type="ECO:0000269" key="4">
    <source>
    </source>
</evidence>
<evidence type="ECO:0000269" key="5">
    <source>
    </source>
</evidence>
<evidence type="ECO:0000269" key="6">
    <source>
    </source>
</evidence>
<evidence type="ECO:0000269" key="7">
    <source>
    </source>
</evidence>
<evidence type="ECO:0000269" key="8">
    <source>
    </source>
</evidence>
<evidence type="ECO:0000269" key="9">
    <source>
    </source>
</evidence>
<evidence type="ECO:0000269" key="10">
    <source>
    </source>
</evidence>
<evidence type="ECO:0000269" key="11">
    <source>
    </source>
</evidence>
<evidence type="ECO:0000269" key="12">
    <source>
    </source>
</evidence>
<evidence type="ECO:0000269" key="13">
    <source>
    </source>
</evidence>
<evidence type="ECO:0000269" key="14">
    <source>
    </source>
</evidence>
<evidence type="ECO:0000269" key="15">
    <source>
    </source>
</evidence>
<evidence type="ECO:0000269" key="16">
    <source>
    </source>
</evidence>
<evidence type="ECO:0000269" key="17">
    <source>
    </source>
</evidence>
<evidence type="ECO:0000269" key="18">
    <source>
    </source>
</evidence>
<evidence type="ECO:0000269" key="19">
    <source>
    </source>
</evidence>
<evidence type="ECO:0000269" key="20">
    <source>
    </source>
</evidence>
<evidence type="ECO:0000269" key="21">
    <source>
    </source>
</evidence>
<evidence type="ECO:0000269" key="22">
    <source>
    </source>
</evidence>
<evidence type="ECO:0000269" key="23">
    <source>
    </source>
</evidence>
<evidence type="ECO:0000269" key="24">
    <source>
    </source>
</evidence>
<evidence type="ECO:0000269" key="25">
    <source>
    </source>
</evidence>
<evidence type="ECO:0000269" key="26">
    <source>
    </source>
</evidence>
<evidence type="ECO:0000269" key="27">
    <source>
    </source>
</evidence>
<evidence type="ECO:0000269" key="28">
    <source>
    </source>
</evidence>
<evidence type="ECO:0000269" key="29">
    <source>
    </source>
</evidence>
<evidence type="ECO:0000269" key="30">
    <source>
    </source>
</evidence>
<evidence type="ECO:0000303" key="31">
    <source>
    </source>
</evidence>
<evidence type="ECO:0000305" key="32"/>
<evidence type="ECO:0000305" key="33">
    <source>
    </source>
</evidence>
<evidence type="ECO:0007744" key="34">
    <source>
    </source>
</evidence>
<evidence type="ECO:0007744" key="35">
    <source>
    </source>
</evidence>
<evidence type="ECO:0007744" key="36">
    <source>
    </source>
</evidence>
<evidence type="ECO:0007744" key="37">
    <source>
    </source>
</evidence>
<evidence type="ECO:0007829" key="38">
    <source>
        <dbReference type="PDB" id="3NQJ"/>
    </source>
</evidence>
<evidence type="ECO:0007829" key="39">
    <source>
        <dbReference type="PDB" id="3R45"/>
    </source>
</evidence>
<evidence type="ECO:0007829" key="40">
    <source>
        <dbReference type="PDB" id="7PII"/>
    </source>
</evidence>
<evidence type="ECO:0007829" key="41">
    <source>
        <dbReference type="PDB" id="7R5R"/>
    </source>
</evidence>
<sequence length="140" mass="15991">MGPRRRSRKPEAPRRRSPSPTPTPGPSRRGPSLGASSHQHSRRRQGWLKEIRKLQKSTHLLIRKLPFSRLAREICVKFTRGVDFNWQAQALLALQEAAEAFLVHLFEDAYLLTLHAGRVTLFPKDVQLARRIRGLEEGLG</sequence>
<comment type="function">
    <text evidence="4 5 6 7 8 10 11 13 21 23 25 27 28 29 30 33">Histone H3-like nucleosomal protein that is specifically found in centromeric nucleosomes (PubMed:11756469, PubMed:14667408, PubMed:15282608, PubMed:15475964, PubMed:15702419, PubMed:17651496, PubMed:19114591, PubMed:20739937, PubMed:27499292, PubMed:7962047, PubMed:9024683). Replaces conventional H3 in the nucleosome core of centromeric chromatin that serves as an assembly site for the inner kinetochore (PubMed:18072184). The presence of CENPA subtly modifies the nucleosome structure and the way DNA is wrapped around the nucleosome and gives rise to protruding DNA ends that are less well-ordered and rigid compared to nucleosomes containing histone H3 (PubMed:26878239, PubMed:27499292). May serve as an epigenetic mark that propagates centromere identity through replication and cell division (PubMed:15282608, PubMed:15475964, PubMed:20739937, PubMed:21478274, PubMed:26878239). Required for recruitment and assembly of kinetochore proteins, and as a consequence required for progress through mitosis, chromosome segregation and cytokinesis (PubMed:11756469, PubMed:14667408, PubMed:18072184, PubMed:23818633, PubMed:25556658, PubMed:27499292).</text>
</comment>
<comment type="subunit">
    <text evidence="6 9 14 15 16 17 18 19 20 21 22 23 25 27 28 30 32">Component of centromeric nucleosomes, where DNA is wrapped around a histone octamer core (PubMed:20739937, PubMed:21743476, PubMed:23818633, PubMed:26878239). The octamer contains two molecules each of H2A, H2B, CENPA and H4 assembled in one CENPA-H4 heterotetramer and two H2A-H2B heterodimers (PubMed:20739937, PubMed:21743476, PubMed:23818633, PubMed:26878239). CENPA modulates the DNA-binding characteristics of nucleosomes so that protruding DNA ends have higher flexibility than in nucleosomes containing conventional histone H3 (PubMed:21743476, PubMed:27499292). Inhibits binding of histone H1 to nucleosomes, since histone H1 binds preferentially to rigid DNA linkers that protrude from nucleosomes (PubMed:27499292). Nucleosomes containing CENPA also contain histone H2A variants such as MACROH2A and H2A.Z/H2AZ1 (Probable). The CENPA-H4 heterotetramer is more compact and structurally more rigid than corresponding H3-H4 heterotetramers (PubMed:15282608, PubMed:20739937). Can assemble into nucleosomes that contain both CENPA and histone H3.3; these nucleosomes interact with a single CENPC chain (PubMed:25408271). Heterotrimer composed of HJURP, CENPA and histone H4, where HJURP interacts with the dimer formed by CENPA and histone H4 and prevents tetramerization of CENPA and H4 (PubMed:21478274). Component of the CENPA-NAC complex, at least composed of CENPA, CENPC, CENPH, CENPM, CENPN, CENPT and CENPU (PubMed:16622419). Interacts (via CATD domain) with HJURP; the interaction is direct and is required for its localization to centromeres (PubMed:15282608, PubMed:19410544, PubMed:19410545, PubMed:23818633, PubMed:25556658). Interacts with CENPC, CENPN and CENPT; interaction is direct. Part of a centromere complex consisting of CENPA, CENPT and CENPW (PubMed:19533040). Identified in centromere complexes containing histones H2A, H2B and H4, and at least CENPA, CENPB, CENPC, CENPT, CENPN, HJURP, SUPT16H, SSRP1 and RSF1 (PubMed:27499292). Can self-associate (PubMed:9024683). The CENPA-H4 heterotetramer can bind DNA by itself (in vitro) (PubMed:20739937). Interacts with CDK1, PPP1CA and RBBP7 (PubMed:25556658).</text>
</comment>
<comment type="subunit">
    <text evidence="3">(Microbial infection) Interacts directly with herpes virus HHV-1 protein ICP0.</text>
</comment>
<comment type="interaction">
    <interactant intactId="EBI-1751979">
        <id>P49450</id>
    </interactant>
    <interactant intactId="EBI-295799">
        <id>Q03188</id>
        <label>CENPC</label>
    </interactant>
    <organismsDiffer>false</organismsDiffer>
    <experiments>4</experiments>
</comment>
<comment type="interaction">
    <interactant intactId="EBI-1751979">
        <id>P49450</id>
    </interactant>
    <interactant intactId="EBI-302023">
        <id>P62805</id>
        <label>H4C9</label>
    </interactant>
    <organismsDiffer>false</organismsDiffer>
    <experiments>6</experiments>
</comment>
<comment type="interaction">
    <interactant intactId="EBI-1751979">
        <id>P49450</id>
    </interactant>
    <interactant intactId="EBI-719429">
        <id>Q8NCD3</id>
        <label>HJURP</label>
    </interactant>
    <organismsDiffer>false</organismsDiffer>
    <experiments>17</experiments>
</comment>
<comment type="interaction">
    <interactant intactId="EBI-1751979">
        <id>P49450</id>
    </interactant>
    <interactant intactId="EBI-15825976">
        <id>Q8NCD3-1</id>
        <label>HJURP</label>
    </interactant>
    <organismsDiffer>false</organismsDiffer>
    <experiments>2</experiments>
</comment>
<comment type="interaction">
    <interactant intactId="EBI-1751979">
        <id>P49450</id>
    </interactant>
    <interactant intactId="EBI-374819">
        <id>P49736</id>
        <label>MCM2</label>
    </interactant>
    <organismsDiffer>false</organismsDiffer>
    <experiments>3</experiments>
</comment>
<comment type="interaction">
    <interactant intactId="EBI-1751979">
        <id>P49450</id>
    </interactant>
    <interactant intactId="EBI-748974">
        <id>Q96CV9</id>
        <label>OPTN</label>
    </interactant>
    <organismsDiffer>false</organismsDiffer>
    <experiments>3</experiments>
</comment>
<comment type="interaction">
    <interactant intactId="EBI-15826012">
        <id>P49450-1</id>
    </interactant>
    <interactant intactId="EBI-302023">
        <id>P62805</id>
        <label>H4C9</label>
    </interactant>
    <organismsDiffer>false</organismsDiffer>
    <experiments>2</experiments>
</comment>
<comment type="interaction">
    <interactant intactId="EBI-15826012">
        <id>P49450-1</id>
    </interactant>
    <interactant intactId="EBI-719429">
        <id>Q8NCD3</id>
        <label>HJURP</label>
    </interactant>
    <organismsDiffer>false</organismsDiffer>
    <experiments>3</experiments>
</comment>
<comment type="interaction">
    <interactant intactId="EBI-15826012">
        <id>P49450-1</id>
    </interactant>
    <interactant intactId="EBI-354150">
        <id>P06748-1</id>
        <label>NPM1</label>
    </interactant>
    <organismsDiffer>false</organismsDiffer>
    <experiments>3</experiments>
</comment>
<comment type="subcellular location">
    <subcellularLocation>
        <location evidence="5 25 30">Nucleus</location>
    </subcellularLocation>
    <subcellularLocation>
        <location evidence="4 6 7 8 10 11 13 20 22 23 25 28 29 30">Chromosome</location>
        <location evidence="4 6 7 8 10 11 13 20 22 23 25 28 29 30">Centromere</location>
    </subcellularLocation>
    <text evidence="13 25">Localizes exclusively to sites of kinetochore assembly in centromeres. Occupies a compact domain at the inner kinetochore plate stretching across 2 thirds of the length of the constriction but encompassing only one third of the constriction width and height (PubMed:19114591). Phosphorylation at Ser-68 during early mitosis abolishes association with chromatin and centromeres and results in dispersed nuclear location (PubMed:25556658).</text>
</comment>
<comment type="alternative products">
    <event type="alternative splicing"/>
    <isoform>
        <id>P49450-1</id>
        <name>1</name>
        <sequence type="displayed"/>
    </isoform>
    <isoform>
        <id>P49450-2</id>
        <name>2</name>
        <sequence type="described" ref="VSP_020430"/>
    </isoform>
</comment>
<comment type="developmental stage">
    <text evidence="24">Expression varies across the cell cycle, with high levels in G2 phase (at the mRNA level).</text>
</comment>
<comment type="domain">
    <text evidence="6 29">The CATD (CENPA targeting domain) region is responsible for the more compact structure of nucleosomes containing CENPA (PubMed:15282608). It is necessary and sufficient to mediate the localization into centromeres (PubMed:15282608, PubMed:7962047).</text>
</comment>
<comment type="PTM">
    <text evidence="3 32">Ubiquitinated (Probable). Interaction with herpes virus HSV-1 ICP0 protein, leads to its degradation by the proteasome pathway.</text>
</comment>
<comment type="PTM">
    <text evidence="23">Trimethylated by NTMT1 at the N-terminal glycine after cleavage of Met-1. Methylation is low before incorporation into nucleosomes and increases with cell cycle progression, with the highest levels in mitotic nucleosomes.</text>
</comment>
<comment type="PTM">
    <text evidence="4 5 12 25">Phosphorylated by CDK1 at Ser-68 during early mitosis; this abolishes association with chromatin and centromeres, prevents interaction with HJURP and thereby prevents premature assembly of CENPA into centromeres (PubMed:25556658). Dephosphorylated at Ser-68 by PPP1CA during late mitosis (PubMed:25556658). Phosphorylation of Ser-7 by AURKA and AURKB during prophase is required for localization of AURKA and AURKB at inner centromere and is essential for normal cytokinesis (PubMed:11756469, PubMed:14667408, PubMed:18239465). Initial phosphorylation during prophase is mediated by AURKA and is maintained by AURKB.</text>
</comment>
<comment type="PTM">
    <text evidence="1">Poly-ADP-ribosylated by PARP1.</text>
</comment>
<comment type="miscellaneous">
    <text>Antibodies against CENPA are present in sera from patients with autoimmune diseases that developed autoantibodies against centrosomal proteins.</text>
</comment>
<comment type="similarity">
    <text evidence="32">Belongs to the histone H3 family.</text>
</comment>
<reference key="1">
    <citation type="journal article" date="1994" name="J. Cell Biol.">
        <title>Human CENP-A contains a histone H3 related histone fold domain that is required for targeting to the centromere.</title>
        <authorList>
            <person name="Sullivan K.F."/>
            <person name="Hechenberger M."/>
            <person name="Masri K."/>
        </authorList>
    </citation>
    <scope>NUCLEOTIDE SEQUENCE [MRNA] (ISOFORM 1)</scope>
    <scope>FUNCTION</scope>
    <scope>SUBCELLULAR LOCATION</scope>
    <scope>REGION</scope>
</reference>
<reference key="2">
    <citation type="submission" date="2003-05" db="EMBL/GenBank/DDBJ databases">
        <title>Cloning of human full-length CDSs in BD Creator(TM) system donor vector.</title>
        <authorList>
            <person name="Kalnine N."/>
            <person name="Chen X."/>
            <person name="Rolfs A."/>
            <person name="Halleck A."/>
            <person name="Hines L."/>
            <person name="Eisenstein S."/>
            <person name="Koundinya M."/>
            <person name="Raphael J."/>
            <person name="Moreira D."/>
            <person name="Kelley T."/>
            <person name="LaBaer J."/>
            <person name="Lin Y."/>
            <person name="Phelan M."/>
            <person name="Farmer A."/>
        </authorList>
    </citation>
    <scope>NUCLEOTIDE SEQUENCE [LARGE SCALE MRNA] (ISOFORM 1)</scope>
</reference>
<reference key="3">
    <citation type="journal article" date="2005" name="Nature">
        <title>Generation and annotation of the DNA sequences of human chromosomes 2 and 4.</title>
        <authorList>
            <person name="Hillier L.W."/>
            <person name="Graves T.A."/>
            <person name="Fulton R.S."/>
            <person name="Fulton L.A."/>
            <person name="Pepin K.H."/>
            <person name="Minx P."/>
            <person name="Wagner-McPherson C."/>
            <person name="Layman D."/>
            <person name="Wylie K."/>
            <person name="Sekhon M."/>
            <person name="Becker M.C."/>
            <person name="Fewell G.A."/>
            <person name="Delehaunty K.D."/>
            <person name="Miner T.L."/>
            <person name="Nash W.E."/>
            <person name="Kremitzki C."/>
            <person name="Oddy L."/>
            <person name="Du H."/>
            <person name="Sun H."/>
            <person name="Bradshaw-Cordum H."/>
            <person name="Ali J."/>
            <person name="Carter J."/>
            <person name="Cordes M."/>
            <person name="Harris A."/>
            <person name="Isak A."/>
            <person name="van Brunt A."/>
            <person name="Nguyen C."/>
            <person name="Du F."/>
            <person name="Courtney L."/>
            <person name="Kalicki J."/>
            <person name="Ozersky P."/>
            <person name="Abbott S."/>
            <person name="Armstrong J."/>
            <person name="Belter E.A."/>
            <person name="Caruso L."/>
            <person name="Cedroni M."/>
            <person name="Cotton M."/>
            <person name="Davidson T."/>
            <person name="Desai A."/>
            <person name="Elliott G."/>
            <person name="Erb T."/>
            <person name="Fronick C."/>
            <person name="Gaige T."/>
            <person name="Haakenson W."/>
            <person name="Haglund K."/>
            <person name="Holmes A."/>
            <person name="Harkins R."/>
            <person name="Kim K."/>
            <person name="Kruchowski S.S."/>
            <person name="Strong C.M."/>
            <person name="Grewal N."/>
            <person name="Goyea E."/>
            <person name="Hou S."/>
            <person name="Levy A."/>
            <person name="Martinka S."/>
            <person name="Mead K."/>
            <person name="McLellan M.D."/>
            <person name="Meyer R."/>
            <person name="Randall-Maher J."/>
            <person name="Tomlinson C."/>
            <person name="Dauphin-Kohlberg S."/>
            <person name="Kozlowicz-Reilly A."/>
            <person name="Shah N."/>
            <person name="Swearengen-Shahid S."/>
            <person name="Snider J."/>
            <person name="Strong J.T."/>
            <person name="Thompson J."/>
            <person name="Yoakum M."/>
            <person name="Leonard S."/>
            <person name="Pearman C."/>
            <person name="Trani L."/>
            <person name="Radionenko M."/>
            <person name="Waligorski J.E."/>
            <person name="Wang C."/>
            <person name="Rock S.M."/>
            <person name="Tin-Wollam A.-M."/>
            <person name="Maupin R."/>
            <person name="Latreille P."/>
            <person name="Wendl M.C."/>
            <person name="Yang S.-P."/>
            <person name="Pohl C."/>
            <person name="Wallis J.W."/>
            <person name="Spieth J."/>
            <person name="Bieri T.A."/>
            <person name="Berkowicz N."/>
            <person name="Nelson J.O."/>
            <person name="Osborne J."/>
            <person name="Ding L."/>
            <person name="Meyer R."/>
            <person name="Sabo A."/>
            <person name="Shotland Y."/>
            <person name="Sinha P."/>
            <person name="Wohldmann P.E."/>
            <person name="Cook L.L."/>
            <person name="Hickenbotham M.T."/>
            <person name="Eldred J."/>
            <person name="Williams D."/>
            <person name="Jones T.A."/>
            <person name="She X."/>
            <person name="Ciccarelli F.D."/>
            <person name="Izaurralde E."/>
            <person name="Taylor J."/>
            <person name="Schmutz J."/>
            <person name="Myers R.M."/>
            <person name="Cox D.R."/>
            <person name="Huang X."/>
            <person name="McPherson J.D."/>
            <person name="Mardis E.R."/>
            <person name="Clifton S.W."/>
            <person name="Warren W.C."/>
            <person name="Chinwalla A.T."/>
            <person name="Eddy S.R."/>
            <person name="Marra M.A."/>
            <person name="Ovcharenko I."/>
            <person name="Furey T.S."/>
            <person name="Miller W."/>
            <person name="Eichler E.E."/>
            <person name="Bork P."/>
            <person name="Suyama M."/>
            <person name="Torrents D."/>
            <person name="Waterston R.H."/>
            <person name="Wilson R.K."/>
        </authorList>
    </citation>
    <scope>NUCLEOTIDE SEQUENCE [LARGE SCALE GENOMIC DNA]</scope>
</reference>
<reference key="4">
    <citation type="submission" date="2005-09" db="EMBL/GenBank/DDBJ databases">
        <authorList>
            <person name="Mural R.J."/>
            <person name="Istrail S."/>
            <person name="Sutton G.G."/>
            <person name="Florea L."/>
            <person name="Halpern A.L."/>
            <person name="Mobarry C.M."/>
            <person name="Lippert R."/>
            <person name="Walenz B."/>
            <person name="Shatkay H."/>
            <person name="Dew I."/>
            <person name="Miller J.R."/>
            <person name="Flanigan M.J."/>
            <person name="Edwards N.J."/>
            <person name="Bolanos R."/>
            <person name="Fasulo D."/>
            <person name="Halldorsson B.V."/>
            <person name="Hannenhalli S."/>
            <person name="Turner R."/>
            <person name="Yooseph S."/>
            <person name="Lu F."/>
            <person name="Nusskern D.R."/>
            <person name="Shue B.C."/>
            <person name="Zheng X.H."/>
            <person name="Zhong F."/>
            <person name="Delcher A.L."/>
            <person name="Huson D.H."/>
            <person name="Kravitz S.A."/>
            <person name="Mouchard L."/>
            <person name="Reinert K."/>
            <person name="Remington K.A."/>
            <person name="Clark A.G."/>
            <person name="Waterman M.S."/>
            <person name="Eichler E.E."/>
            <person name="Adams M.D."/>
            <person name="Hunkapiller M.W."/>
            <person name="Myers E.W."/>
            <person name="Venter J.C."/>
        </authorList>
    </citation>
    <scope>NUCLEOTIDE SEQUENCE [LARGE SCALE GENOMIC DNA]</scope>
</reference>
<reference key="5">
    <citation type="journal article" date="2004" name="Genome Res.">
        <title>The status, quality, and expansion of the NIH full-length cDNA project: the Mammalian Gene Collection (MGC).</title>
        <authorList>
            <consortium name="The MGC Project Team"/>
        </authorList>
    </citation>
    <scope>NUCLEOTIDE SEQUENCE [LARGE SCALE MRNA] (ISOFORMS 1 AND 2)</scope>
    <source>
        <tissue>Uterus</tissue>
    </source>
</reference>
<reference key="6">
    <citation type="journal article" date="1997" name="J. Cell Biol.">
        <title>Assembly of CENP-A into centromeric chromatin requires a cooperative array of nucleosomal DNA contact sites.</title>
        <authorList>
            <person name="Shelby R.D."/>
            <person name="Vafa O."/>
            <person name="Sullivan K.F."/>
        </authorList>
    </citation>
    <scope>NUCLEOTIDE SEQUENCE [GENOMIC DNA] OF 1-33</scope>
    <scope>FUNCTION</scope>
    <scope>SUBCELLULAR LOCATION</scope>
    <scope>SUBUNIT</scope>
</reference>
<reference key="7">
    <citation type="journal article" date="2000" name="Clin. Exp. Immunol.">
        <title>Autoepitopes on autoantigen centromere protein-A (CENP-A) are restricted to the N-terminal region, which has no homology with histone H3.</title>
        <authorList>
            <person name="Muro Y."/>
            <person name="Azuma N."/>
            <person name="Onouchi H."/>
            <person name="Kunimatsu M."/>
            <person name="Tomita Y."/>
            <person name="Sasaki M."/>
            <person name="Sugimoto K."/>
        </authorList>
    </citation>
    <scope>IDENTIFICATION OF AUTOANTIGENIC EPITOPES</scope>
</reference>
<reference key="8">
    <citation type="journal article" date="2001" name="J. Biol. Chem.">
        <title>Degradation of nucleosome-associated centromeric histone H3-like protein CENP-A induced by herpes simplex virus type 1 protein ICP0.</title>
        <authorList>
            <person name="Lomonte P."/>
            <person name="Sullivan K.F."/>
            <person name="Everett R.D."/>
        </authorList>
    </citation>
    <scope>UBIQUITINATION</scope>
    <scope>INTERACTION WITH HHV-1 ICP0 (MICROBIAL INFECTION)</scope>
</reference>
<reference key="9">
    <citation type="journal article" date="2001" name="J. Cell Biol.">
        <title>CENP-A is phosphorylated by Aurora B kinase and plays an unexpected role in completion of cytokinesis.</title>
        <authorList>
            <person name="Zeitlin S.G."/>
            <person name="Shelby R.D."/>
            <person name="Sullivan K.F."/>
        </authorList>
    </citation>
    <scope>PHOSPHORYLATION AT SER-7</scope>
    <scope>MUTAGENESIS OF SER-7</scope>
    <scope>FUNCTION</scope>
    <scope>SUBCELLULAR LOCATION</scope>
</reference>
<reference key="10">
    <citation type="journal article" date="2003" name="Dev. Cell">
        <title>CENP-A phosphorylation by Aurora-A in prophase is required for enrichment of Aurora-B at inner centromeres and for kinetochore function.</title>
        <authorList>
            <person name="Kunitoku N."/>
            <person name="Sasayama T."/>
            <person name="Marumoto T."/>
            <person name="Zhang D."/>
            <person name="Honda S."/>
            <person name="Kobayashi O."/>
            <person name="Hatakeyama K."/>
            <person name="Ushio Y."/>
            <person name="Saya H."/>
            <person name="Hirota T."/>
        </authorList>
    </citation>
    <scope>PHOSPHORYLATION AT SER-7</scope>
    <scope>MUTAGENESIS OF SER-7</scope>
    <scope>FUNCTION</scope>
    <scope>INTERACTION WITH AURKA</scope>
    <scope>SUBCELLULAR LOCATION</scope>
</reference>
<reference key="11">
    <citation type="journal article" date="2004" name="Chromosome Res.">
        <title>Chromosome size and origin as determinants of the level of CENP-A incorporation into human centromeres.</title>
        <authorList>
            <person name="Irvine D.V."/>
            <person name="Amor D.J."/>
            <person name="Perry J."/>
            <person name="Sirvent N."/>
            <person name="Pedeutour F."/>
            <person name="Choo K.H."/>
            <person name="Saffery R."/>
        </authorList>
    </citation>
    <scope>SUBCELLULAR LOCATION</scope>
    <scope>FUNCTION</scope>
</reference>
<reference key="12">
    <citation type="journal article" date="2004" name="Nat. Struct. Mol. Biol.">
        <title>Centromeric chromatin exhibits a histone modification pattern that is distinct from both euchromatin and heterochromatin.</title>
        <authorList>
            <person name="Sullivan B.A."/>
            <person name="Karpen G.H."/>
        </authorList>
    </citation>
    <scope>SUBCELLULAR LOCATION</scope>
    <scope>FUNCTION</scope>
</reference>
<reference key="13">
    <citation type="journal article" date="2004" name="Nature">
        <title>Structural determinants for generating centromeric chromatin.</title>
        <authorList>
            <person name="Black B.E."/>
            <person name="Foltz D.R."/>
            <person name="Chakravarthy S."/>
            <person name="Luger K."/>
            <person name="Woods V.L. Jr."/>
            <person name="Cleveland D.W."/>
        </authorList>
    </citation>
    <scope>SUBUNIT</scope>
    <scope>DOMAIN CATD</scope>
    <scope>SUBCELLULAR LOCATION</scope>
    <scope>FUNCTION</scope>
</reference>
<reference key="14">
    <citation type="journal article" date="2006" name="Cell">
        <title>Global, in vivo, and site-specific phosphorylation dynamics in signaling networks.</title>
        <authorList>
            <person name="Olsen J.V."/>
            <person name="Blagoev B."/>
            <person name="Gnad F."/>
            <person name="Macek B."/>
            <person name="Kumar C."/>
            <person name="Mortensen P."/>
            <person name="Mann M."/>
        </authorList>
    </citation>
    <scope>IDENTIFICATION BY MASS SPECTROMETRY [LARGE SCALE ANALYSIS]</scope>
    <source>
        <tissue>Cervix carcinoma</tissue>
    </source>
</reference>
<reference key="15">
    <citation type="journal article" date="2006" name="Nat. Cell Biol.">
        <title>The human CENP-A centromeric nucleosome-associated complex.</title>
        <authorList>
            <person name="Foltz D.R."/>
            <person name="Jansen L.E.T."/>
            <person name="Black B.E."/>
            <person name="Bailey A.O."/>
            <person name="Yates J.R. III"/>
            <person name="Cleveland D.W."/>
        </authorList>
    </citation>
    <scope>IDENTIFICATION BY MASS SPECTROMETRY</scope>
    <scope>IDENTIFICATION IN THE CENPA-NAC COMPLEX WITH CENPC; CENPH; CENPM; CENPN; CENPT AND CENPU</scope>
</reference>
<reference key="16">
    <citation type="journal article" date="2007" name="Genome Biol.">
        <title>Co-localization of CENP-C and CENP-H to discontinuous domains of CENP-A chromatin at human neocentromeres.</title>
        <authorList>
            <person name="Alonso A."/>
            <person name="Fritz B."/>
            <person name="Hasson D."/>
            <person name="Abrusan G."/>
            <person name="Cheung F."/>
            <person name="Yoda K."/>
            <person name="Radlwimmer B."/>
            <person name="Ladurner A.G."/>
            <person name="Warburton P.E."/>
        </authorList>
    </citation>
    <scope>SUBCELLULAR LOCATION</scope>
    <scope>FUNCTION</scope>
</reference>
<reference key="17">
    <citation type="journal article" date="2008" name="Cell Cycle">
        <title>Aurora-C and Aurora-B share phosphorylation and regulation of CENP-A and Borealin during mitosis.</title>
        <authorList>
            <person name="Slattery S.D."/>
            <person name="Moore R.V."/>
            <person name="Brinkley B.R."/>
            <person name="Hall R.M."/>
        </authorList>
    </citation>
    <scope>PHOSPHORYLATION AT SER-7</scope>
</reference>
<reference key="18">
    <citation type="journal article" date="2008" name="ChemBioChem">
        <title>Assembly of the inner kinetochore proteins CENP-A and CENP-B in living human cells.</title>
        <authorList>
            <person name="Orthaus S."/>
            <person name="Biskup C."/>
            <person name="Hoffmann B."/>
            <person name="Hoischen C."/>
            <person name="Ohndorf S."/>
            <person name="Benndorf K."/>
            <person name="Diekmann S."/>
        </authorList>
    </citation>
    <scope>FUNCTION</scope>
    <scope>SUBCELLULAR LOCATION</scope>
</reference>
<reference key="19">
    <citation type="journal article" date="2008" name="J. Biophotonics">
        <title>Live-cell imaging reveals sustained centromere binding of CENP-T via CENP-A and CENP-B.</title>
        <authorList>
            <person name="Hellwig D."/>
            <person name="Muench S."/>
            <person name="Orthaus S."/>
            <person name="Hoischen C."/>
            <person name="Hemmerich P."/>
            <person name="Diekmann S."/>
        </authorList>
    </citation>
    <scope>INTERACTION WITH CENPT</scope>
</reference>
<reference key="20">
    <citation type="journal article" date="2008" name="J. Cell Biol.">
        <title>Three-dimensional localization of CENP-A suggests a complex higher order structure of centromeric chromatin.</title>
        <authorList>
            <person name="Marshall O.J."/>
            <person name="Marshall A.T."/>
            <person name="Choo K.H.A."/>
        </authorList>
    </citation>
    <scope>FUNCTION</scope>
    <scope>SUBCELLULAR LOCATION</scope>
</reference>
<reference key="21">
    <citation type="journal article" date="2008" name="Proc. Natl. Acad. Sci. U.S.A.">
        <title>A quantitative atlas of mitotic phosphorylation.</title>
        <authorList>
            <person name="Dephoure N."/>
            <person name="Zhou C."/>
            <person name="Villen J."/>
            <person name="Beausoleil S.A."/>
            <person name="Bakalarski C.E."/>
            <person name="Elledge S.J."/>
            <person name="Gygi S.P."/>
        </authorList>
    </citation>
    <scope>PHOSPHORYLATION [LARGE SCALE ANALYSIS] AT SER-17; SER-19 AND SER-27</scope>
    <scope>IDENTIFICATION BY MASS SPECTROMETRY [LARGE SCALE ANALYSIS]</scope>
    <source>
        <tissue>Cervix carcinoma</tissue>
    </source>
</reference>
<reference key="22">
    <citation type="journal article" date="2009" name="Cell">
        <title>Centromere-specific assembly of CENP-A nucleosomes is mediated by HJURP.</title>
        <authorList>
            <person name="Foltz D.R."/>
            <person name="Jansen L.E.T."/>
            <person name="Bailey A.O."/>
            <person name="Yates J.R. III"/>
            <person name="Bassett E.A."/>
            <person name="Wood S."/>
            <person name="Black B.E."/>
            <person name="Cleveland D.W."/>
        </authorList>
    </citation>
    <scope>INTERACTION WITH HJURP</scope>
</reference>
<reference key="23">
    <citation type="journal article" date="2009" name="Cell">
        <title>HJURP is a cell-cycle-dependent maintenance and deposition factor of CENP-A at centromeres.</title>
        <authorList>
            <person name="Dunleavy E.M."/>
            <person name="Roche D."/>
            <person name="Tagami H."/>
            <person name="Lacoste N."/>
            <person name="Ray-Gallet D."/>
            <person name="Nakamura Y."/>
            <person name="Daigo Y."/>
            <person name="Nakatani Y."/>
            <person name="Almouzni-Pettinotti G."/>
        </authorList>
    </citation>
    <scope>INTERACTION WITH HJURP</scope>
</reference>
<reference key="24">
    <citation type="journal article" date="2009" name="Mol. Cells">
        <title>Cancer-upregulated gene 2 (CUG2), a new component of centromere complex, is required for kinetochore function.</title>
        <authorList>
            <person name="Kim H."/>
            <person name="Lee M."/>
            <person name="Lee S."/>
            <person name="Park B."/>
            <person name="Koh W."/>
            <person name="Lee D.J."/>
            <person name="Lim D.S."/>
            <person name="Lee S."/>
        </authorList>
    </citation>
    <scope>IDENTIFICATION IN COMPLEX WITH CENPT AND CENPW</scope>
</reference>
<reference key="25">
    <citation type="journal article" date="2009" name="Nat. Cell Biol.">
        <title>Centromere assembly requires the direct recognition of CENP-A nucleosomes by CENP-N.</title>
        <authorList>
            <person name="Carroll C.W."/>
            <person name="Silva M.C.C."/>
            <person name="Godek K.M."/>
            <person name="Jansen L.E.T."/>
            <person name="Straight A.F."/>
        </authorList>
    </citation>
    <scope>INTERACTION WITH CENPN</scope>
</reference>
<reference key="26">
    <citation type="journal article" date="2009" name="PLoS ONE">
        <title>The C-terminal domain of CENP-C displays multiple and critical functions for mammalian centromere formation.</title>
        <authorList>
            <person name="Trazzi S."/>
            <person name="Perini G."/>
            <person name="Bernardoni R."/>
            <person name="Zoli M."/>
            <person name="Reese J.C."/>
            <person name="Musacchio A."/>
            <person name="Della Valle G."/>
        </authorList>
    </citation>
    <scope>INTERACTION WITH CENPC</scope>
</reference>
<reference key="27">
    <citation type="journal article" date="2011" name="Sci. Signal.">
        <title>System-wide temporal characterization of the proteome and phosphoproteome of human embryonic stem cell differentiation.</title>
        <authorList>
            <person name="Rigbolt K.T."/>
            <person name="Prokhorova T.A."/>
            <person name="Akimov V."/>
            <person name="Henningsen J."/>
            <person name="Johansen P.T."/>
            <person name="Kratchmarova I."/>
            <person name="Kassem M."/>
            <person name="Mann M."/>
            <person name="Olsen J.V."/>
            <person name="Blagoev B."/>
        </authorList>
    </citation>
    <scope>PHOSPHORYLATION [LARGE SCALE ANALYSIS] AT SER-17; SER-19 AND SER-27</scope>
    <scope>IDENTIFICATION BY MASS SPECTROMETRY [LARGE SCALE ANALYSIS]</scope>
</reference>
<reference key="28">
    <citation type="journal article" date="2013" name="J. Proteome Res.">
        <title>Toward a comprehensive characterization of a human cancer cell phosphoproteome.</title>
        <authorList>
            <person name="Zhou H."/>
            <person name="Di Palma S."/>
            <person name="Preisinger C."/>
            <person name="Peng M."/>
            <person name="Polat A.N."/>
            <person name="Heck A.J."/>
            <person name="Mohammed S."/>
        </authorList>
    </citation>
    <scope>PHOSPHORYLATION [LARGE SCALE ANALYSIS] AT SER-17 AND SER-19</scope>
    <scope>IDENTIFICATION BY MASS SPECTROMETRY [LARGE SCALE ANALYSIS]</scope>
    <source>
        <tissue>Cervix carcinoma</tissue>
        <tissue>Erythroleukemia</tissue>
    </source>
</reference>
<reference key="29">
    <citation type="journal article" date="2013" name="Proc. Natl. Acad. Sci. U.S.A.">
        <title>Posttranslational modification of CENP-A influences the conformation of centromeric chromatin.</title>
        <authorList>
            <person name="Bailey A.O."/>
            <person name="Panchenko T."/>
            <person name="Sathyan K.M."/>
            <person name="Petkowski J.J."/>
            <person name="Pai P.J."/>
            <person name="Bai D.L."/>
            <person name="Russell D.H."/>
            <person name="Macara I.G."/>
            <person name="Shabanowitz J."/>
            <person name="Hunt D.F."/>
            <person name="Black B.E."/>
            <person name="Foltz D.R."/>
        </authorList>
    </citation>
    <scope>FUNCTION</scope>
    <scope>SUBCELLULAR LOCATION</scope>
    <scope>IDENTIFICATION BY MASS SPECTROMETRY</scope>
    <scope>PHOSPHORYLATION AT SER-17 AND SER-19</scope>
    <scope>MUTAGENESIS OF SER-17 AND SER-19</scope>
    <scope>METHYLATION AT GLY-2</scope>
    <scope>CLEAVAGE OF INITIATOR METHIONINE</scope>
    <scope>SUBUNIT</scope>
    <scope>INTERACTION WITH HJURP</scope>
</reference>
<reference key="30">
    <citation type="journal article" date="2014" name="J. Proteomics">
        <title>An enzyme assisted RP-RPLC approach for in-depth analysis of human liver phosphoproteome.</title>
        <authorList>
            <person name="Bian Y."/>
            <person name="Song C."/>
            <person name="Cheng K."/>
            <person name="Dong M."/>
            <person name="Wang F."/>
            <person name="Huang J."/>
            <person name="Sun D."/>
            <person name="Wang L."/>
            <person name="Ye M."/>
            <person name="Zou H."/>
        </authorList>
    </citation>
    <scope>PHOSPHORYLATION [LARGE SCALE ANALYSIS] AT SER-17 AND SER-19</scope>
    <scope>IDENTIFICATION BY MASS SPECTROMETRY [LARGE SCALE ANALYSIS]</scope>
    <source>
        <tissue>Liver</tissue>
    </source>
</reference>
<reference key="31">
    <citation type="journal article" date="2014" name="Open Biol.">
        <title>A CENP-S/X complex assembles at the centromere in S and G2 phases of the human cell cycle.</title>
        <authorList>
            <person name="Dornblut C."/>
            <person name="Quinn N."/>
            <person name="Monajambashi S."/>
            <person name="Prendergast L."/>
            <person name="van Vuuren C."/>
            <person name="Muench S."/>
            <person name="Deng W."/>
            <person name="Leonhardt H."/>
            <person name="Cardoso M.C."/>
            <person name="Hoischen C."/>
            <person name="Diekmann S."/>
            <person name="Sullivan K.F."/>
        </authorList>
    </citation>
    <scope>DEVELOPMENTAL STAGE</scope>
</reference>
<reference key="32">
    <citation type="journal article" date="2015" name="Dev. Cell">
        <title>Dynamic phosphorylation of CENP-A at Ser68 orchestrates its cell-cycle-dependent deposition at centromeres.</title>
        <authorList>
            <person name="Yu Z."/>
            <person name="Zhou X."/>
            <person name="Wang W."/>
            <person name="Deng W."/>
            <person name="Fang J."/>
            <person name="Hu H."/>
            <person name="Wang Z."/>
            <person name="Li S."/>
            <person name="Cui L."/>
            <person name="Shen J."/>
            <person name="Zhai L."/>
            <person name="Peng S."/>
            <person name="Wong J."/>
            <person name="Dong S."/>
            <person name="Yuan Z."/>
            <person name="Ou G."/>
            <person name="Zhang X."/>
            <person name="Xu P."/>
            <person name="Lou J."/>
            <person name="Yang N."/>
            <person name="Chen P."/>
            <person name="Xu R.M."/>
            <person name="Li G."/>
        </authorList>
    </citation>
    <scope>FUNCTION</scope>
    <scope>PHOSPHORYLATION AT SER-68</scope>
    <scope>MUTAGENESIS OF SER-68</scope>
    <scope>SUBCELLULAR LOCATION</scope>
    <scope>INTERACTION WITH HJURP; CDK1; PPP1CA AND RBBP7</scope>
</reference>
<reference key="33">
    <citation type="journal article" date="2016" name="Mol. Cell">
        <title>The flexible ends of CENP-A nucleosome are required for mitotic fidelity.</title>
        <authorList>
            <person name="Roulland Y."/>
            <person name="Ouararhni K."/>
            <person name="Naidenov M."/>
            <person name="Ramos L."/>
            <person name="Shuaib M."/>
            <person name="Syed S.H."/>
            <person name="Lone I.N."/>
            <person name="Boopathi R."/>
            <person name="Fontaine E."/>
            <person name="Papai G."/>
            <person name="Tachiwana H."/>
            <person name="Gautier T."/>
            <person name="Skoufias D."/>
            <person name="Padmanabhan K."/>
            <person name="Bednar J."/>
            <person name="Kurumizaka H."/>
            <person name="Schultz P."/>
            <person name="Angelov D."/>
            <person name="Hamiche A."/>
            <person name="Dimitrov S."/>
        </authorList>
    </citation>
    <scope>FUNCTION</scope>
    <scope>ELECTRON MICROSCOPY OF NUCLEOSOME</scope>
    <scope>SUBUNIT</scope>
    <scope>DOMAIN</scope>
    <scope>SUBCELLULAR LOCATION</scope>
</reference>
<reference key="34">
    <citation type="journal article" date="2016" name="Nat. Struct. Mol. Biol.">
        <title>CENP-C directs a structural transition of CENP-A nucleosomes mainly through sliding of DNA gyres.</title>
        <authorList>
            <person name="Falk S.J."/>
            <person name="Lee J."/>
            <person name="Sekulic N."/>
            <person name="Sennett M.A."/>
            <person name="Lee T.H."/>
            <person name="Black B.E."/>
        </authorList>
    </citation>
    <scope>FUNCTION</scope>
    <scope>SUBUNIT</scope>
</reference>
<reference key="35">
    <citation type="journal article" date="2010" name="Nature">
        <title>The structure of (CENP-A-H4)(2) reveals physical features that mark centromeres.</title>
        <authorList>
            <person name="Sekulic N."/>
            <person name="Bassett E.A."/>
            <person name="Rogers D.J."/>
            <person name="Black B.E."/>
        </authorList>
    </citation>
    <scope>X-RAY CRYSTALLOGRAPHY (2.5 ANGSTROMS)</scope>
    <scope>FUNCTION</scope>
    <scope>SUBCELLULAR LOCATION</scope>
    <scope>SUBUNIT</scope>
    <scope>MUTAGENESIS OF HIS-104 AND LEU-112</scope>
</reference>
<reference key="36">
    <citation type="journal article" date="2011" name="Genes Dev.">
        <title>Structure of a CENP-A-histone H4 heterodimer in complex with chaperone HJURP.</title>
        <authorList>
            <person name="Hu H."/>
            <person name="Liu Y."/>
            <person name="Wang M."/>
            <person name="Fang J."/>
            <person name="Huang H."/>
            <person name="Yang N."/>
            <person name="Li Y."/>
            <person name="Wang J."/>
            <person name="Yao X."/>
            <person name="Shi Y."/>
            <person name="Li G."/>
            <person name="Xu R.M."/>
        </authorList>
    </citation>
    <scope>X-RAY CRYSTALLOGRAPHY (2.6 ANGSTROMS) IN COMPLEX WITH HJURP AND HISTONE H4</scope>
    <scope>FUNCTION</scope>
    <scope>SUBUNIT</scope>
</reference>
<reference key="37">
    <citation type="journal article" date="2011" name="Nature">
        <title>Crystal structure of the human centromeric nucleosome containing CENP-A.</title>
        <authorList>
            <person name="Tachiwana H."/>
            <person name="Kagawa W."/>
            <person name="Shiga T."/>
            <person name="Osakabe A."/>
            <person name="Miya Y."/>
            <person name="Saito K."/>
            <person name="Hayashi-Takanaka Y."/>
            <person name="Oda T."/>
            <person name="Sato M."/>
            <person name="Park S.Y."/>
            <person name="Kimura H."/>
            <person name="Kurumizaka H."/>
        </authorList>
    </citation>
    <scope>X-RAY CRYSTALLOGRAPHY (3.60 ANGSTROMS) OF NUCLEOSOME</scope>
    <scope>SUBUNIT</scope>
    <scope>SUBCELLULAR LOCATION</scope>
    <scope>MUTAGENESIS OF 80-ARG-GLY-81</scope>
</reference>
<reference key="38">
    <citation type="journal article" date="2014" name="Sci. Rep.">
        <title>Crystal structure and stable property of the cancer-associated heterotypic nucleosome containing CENP-A and H3.3.</title>
        <authorList>
            <person name="Arimura Y."/>
            <person name="Shirayama K."/>
            <person name="Horikoshi N."/>
            <person name="Fujita R."/>
            <person name="Taguchi H."/>
            <person name="Kagawa W."/>
            <person name="Fukagawa T."/>
            <person name="Almouzni G."/>
            <person name="Kurumizaka H."/>
        </authorList>
    </citation>
    <scope>X-RAY CRYSTALLOGRAPHY (2.67 ANGSTROMS) OF NUCLEOSOME CONTAINING BOTH CENPA AND HISTONE H3</scope>
    <scope>SUBUNIT</scope>
</reference>
<reference key="39">
    <citation type="journal article" date="2015" name="Genes Dev.">
        <title>Molecular basis for histone N-terminal methylation by NRMT1.</title>
        <authorList>
            <person name="Wu R."/>
            <person name="Yue Y."/>
            <person name="Zheng X."/>
            <person name="Li H."/>
        </authorList>
    </citation>
    <scope>X-RAY CRYSTALLOGRAPHY (1.30 ANGSTROMS) OF 3-10 IN COMPLEX WITH NTMT1</scope>
    <scope>METHYLATION AT GLY-2</scope>
</reference>
<name>CENPA_HUMAN</name>
<proteinExistence type="evidence at protein level"/>
<keyword id="KW-0002">3D-structure</keyword>
<keyword id="KW-0013">ADP-ribosylation</keyword>
<keyword id="KW-0025">Alternative splicing</keyword>
<keyword id="KW-0131">Cell cycle</keyword>
<keyword id="KW-0132">Cell division</keyword>
<keyword id="KW-0137">Centromere</keyword>
<keyword id="KW-0158">Chromosome</keyword>
<keyword id="KW-0238">DNA-binding</keyword>
<keyword id="KW-0945">Host-virus interaction</keyword>
<keyword id="KW-0488">Methylation</keyword>
<keyword id="KW-0498">Mitosis</keyword>
<keyword id="KW-0544">Nucleosome core</keyword>
<keyword id="KW-0539">Nucleus</keyword>
<keyword id="KW-0597">Phosphoprotein</keyword>
<keyword id="KW-1267">Proteomics identification</keyword>
<keyword id="KW-1185">Reference proteome</keyword>
<keyword id="KW-0832">Ubl conjugation</keyword>
<gene>
    <name type="primary">CENPA</name>
</gene>
<protein>
    <recommendedName>
        <fullName>Histone H3-like centromeric protein A</fullName>
    </recommendedName>
    <alternativeName>
        <fullName>Centromere autoantigen A</fullName>
    </alternativeName>
    <alternativeName>
        <fullName>Centromere protein A</fullName>
        <shortName>CENP-A</shortName>
    </alternativeName>
</protein>
<organism>
    <name type="scientific">Homo sapiens</name>
    <name type="common">Human</name>
    <dbReference type="NCBI Taxonomy" id="9606"/>
    <lineage>
        <taxon>Eukaryota</taxon>
        <taxon>Metazoa</taxon>
        <taxon>Chordata</taxon>
        <taxon>Craniata</taxon>
        <taxon>Vertebrata</taxon>
        <taxon>Euteleostomi</taxon>
        <taxon>Mammalia</taxon>
        <taxon>Eutheria</taxon>
        <taxon>Euarchontoglires</taxon>
        <taxon>Primates</taxon>
        <taxon>Haplorrhini</taxon>
        <taxon>Catarrhini</taxon>
        <taxon>Hominidae</taxon>
        <taxon>Homo</taxon>
    </lineage>
</organism>
<feature type="initiator methionine" description="Removed" evidence="23">
    <location>
        <position position="1"/>
    </location>
</feature>
<feature type="chain" id="PRO_0000221373" description="Histone H3-like centromeric protein A">
    <location>
        <begin position="2"/>
        <end position="140"/>
    </location>
</feature>
<feature type="region of interest" description="Disordered" evidence="2">
    <location>
        <begin position="1"/>
        <end position="46"/>
    </location>
</feature>
<feature type="region of interest" description="Important for flexibility of DNA ends that protrude from nucleosomes" evidence="28">
    <location>
        <begin position="39"/>
        <end position="54"/>
    </location>
</feature>
<feature type="region of interest" description="CATD" evidence="6 29">
    <location>
        <begin position="75"/>
        <end position="116"/>
    </location>
</feature>
<feature type="compositionally biased region" description="Low complexity" evidence="2">
    <location>
        <begin position="26"/>
        <end position="37"/>
    </location>
</feature>
<feature type="modified residue" description="N,N,N-trimethylglycine" evidence="23 26">
    <location>
        <position position="2"/>
    </location>
</feature>
<feature type="modified residue" description="Phosphoserine; by AURKA and AURKB" evidence="4 5 12">
    <location>
        <position position="7"/>
    </location>
</feature>
<feature type="modified residue" description="Phosphoserine" evidence="23 34 35 36 37">
    <location>
        <position position="17"/>
    </location>
</feature>
<feature type="modified residue" description="Phosphoserine" evidence="23 34 35 36 37">
    <location>
        <position position="19"/>
    </location>
</feature>
<feature type="modified residue" description="Phosphoserine" evidence="34 35">
    <location>
        <position position="27"/>
    </location>
</feature>
<feature type="modified residue" description="Phosphoserine" evidence="25">
    <location>
        <position position="68"/>
    </location>
</feature>
<feature type="splice variant" id="VSP_020430" description="In isoform 2." evidence="31">
    <location>
        <begin position="71"/>
        <end position="96"/>
    </location>
</feature>
<feature type="mutagenesis site" description="Induces a delay at the terminal stage of cytokinesis and chromosome misalignment during mitosis due to a defect in kinetochore attachment to microtubules." evidence="4 5">
    <original>S</original>
    <variation>A</variation>
    <location>
        <position position="7"/>
    </location>
</feature>
<feature type="mutagenesis site" description="Impaired mitotic chromosome congression and chromosome segregation; when associated with A-19." evidence="23">
    <original>S</original>
    <variation>A</variation>
    <location>
        <position position="17"/>
    </location>
</feature>
<feature type="mutagenesis site" description="Impaired mitotic chromosome congression and chromosome segregation; when associated with A-17." evidence="23">
    <original>S</original>
    <variation>A</variation>
    <location>
        <position position="19"/>
    </location>
</feature>
<feature type="mutagenesis site" description="No effect on interaction with HJURP. Impairs localization at centromeres." evidence="25">
    <original>S</original>
    <variation>A</variation>
    <location>
        <position position="68"/>
    </location>
</feature>
<feature type="mutagenesis site" description="Impairs interaction with HJURP, association with chromatin and localization at centromeres." evidence="25">
    <original>S</original>
    <variation>E</variation>
    <variation>Q</variation>
    <location>
        <position position="68"/>
    </location>
</feature>
<feature type="mutagenesis site" description="Impairs retention at centromeres, but not targeting to centromeres." evidence="22">
    <original>RG</original>
    <variation>AA</variation>
    <location>
        <begin position="80"/>
        <end position="81"/>
    </location>
</feature>
<feature type="mutagenesis site" description="Reduces location at centromeres. Abolishes location at centromeres; when associated with C-112." evidence="20">
    <original>H</original>
    <variation>G</variation>
    <location>
        <position position="104"/>
    </location>
</feature>
<feature type="mutagenesis site" description="No effect on location at centromeres. Abolishes location at centromeres; when associated with G-104." evidence="20">
    <original>L</original>
    <variation>C</variation>
    <location>
        <position position="112"/>
    </location>
</feature>
<feature type="helix" evidence="41">
    <location>
        <begin position="46"/>
        <end position="54"/>
    </location>
</feature>
<feature type="helix" evidence="38">
    <location>
        <begin position="64"/>
        <end position="79"/>
    </location>
</feature>
<feature type="strand" evidence="40">
    <location>
        <begin position="80"/>
        <end position="82"/>
    </location>
</feature>
<feature type="strand" evidence="39">
    <location>
        <begin position="85"/>
        <end position="87"/>
    </location>
</feature>
<feature type="helix" evidence="38">
    <location>
        <begin position="88"/>
        <end position="115"/>
    </location>
</feature>
<feature type="strand" evidence="38">
    <location>
        <begin position="119"/>
        <end position="121"/>
    </location>
</feature>
<feature type="helix" evidence="38">
    <location>
        <begin position="123"/>
        <end position="133"/>
    </location>
</feature>
<feature type="turn" evidence="41">
    <location>
        <begin position="135"/>
        <end position="138"/>
    </location>
</feature>
<dbReference type="EMBL" id="U14518">
    <property type="protein sequence ID" value="AAA57416.1"/>
    <property type="molecule type" value="mRNA"/>
</dbReference>
<dbReference type="EMBL" id="BT007246">
    <property type="protein sequence ID" value="AAP35910.1"/>
    <property type="molecule type" value="mRNA"/>
</dbReference>
<dbReference type="EMBL" id="AC011740">
    <property type="protein sequence ID" value="AAX93267.1"/>
    <property type="molecule type" value="Genomic_DNA"/>
</dbReference>
<dbReference type="EMBL" id="CH471053">
    <property type="protein sequence ID" value="EAX00669.1"/>
    <property type="molecule type" value="Genomic_DNA"/>
</dbReference>
<dbReference type="EMBL" id="CH471053">
    <property type="protein sequence ID" value="EAX00670.1"/>
    <property type="molecule type" value="Genomic_DNA"/>
</dbReference>
<dbReference type="EMBL" id="BC000881">
    <property type="protein sequence ID" value="AAH00881.1"/>
    <property type="molecule type" value="mRNA"/>
</dbReference>
<dbReference type="EMBL" id="BC002703">
    <property type="protein sequence ID" value="AAH02703.1"/>
    <property type="molecule type" value="mRNA"/>
</dbReference>
<dbReference type="EMBL" id="U82609">
    <property type="protein sequence ID" value="AAB47505.1"/>
    <property type="molecule type" value="Genomic_DNA"/>
</dbReference>
<dbReference type="CCDS" id="CCDS1729.1">
    <molecule id="P49450-1"/>
</dbReference>
<dbReference type="CCDS" id="CCDS42662.1">
    <molecule id="P49450-2"/>
</dbReference>
<dbReference type="PIR" id="I38855">
    <property type="entry name" value="I38855"/>
</dbReference>
<dbReference type="RefSeq" id="NP_001035891.1">
    <molecule id="P49450-2"/>
    <property type="nucleotide sequence ID" value="NM_001042426.2"/>
</dbReference>
<dbReference type="RefSeq" id="NP_001800.1">
    <molecule id="P49450-1"/>
    <property type="nucleotide sequence ID" value="NM_001809.4"/>
</dbReference>
<dbReference type="PDB" id="3AN2">
    <property type="method" value="X-ray"/>
    <property type="resolution" value="3.60 A"/>
    <property type="chains" value="A/E=1-140"/>
</dbReference>
<dbReference type="PDB" id="3NQJ">
    <property type="method" value="X-ray"/>
    <property type="resolution" value="2.10 A"/>
    <property type="chains" value="A=60-140"/>
</dbReference>
<dbReference type="PDB" id="3NQU">
    <property type="method" value="X-ray"/>
    <property type="resolution" value="2.50 A"/>
    <property type="chains" value="A=1-140"/>
</dbReference>
<dbReference type="PDB" id="3R45">
    <property type="method" value="X-ray"/>
    <property type="resolution" value="2.60 A"/>
    <property type="chains" value="A=1-140"/>
</dbReference>
<dbReference type="PDB" id="3WTP">
    <property type="method" value="X-ray"/>
    <property type="resolution" value="2.67 A"/>
    <property type="chains" value="A=1-140"/>
</dbReference>
<dbReference type="PDB" id="5CVD">
    <property type="method" value="X-ray"/>
    <property type="resolution" value="1.30 A"/>
    <property type="chains" value="D/E=3-10"/>
</dbReference>
<dbReference type="PDB" id="5Z23">
    <property type="method" value="X-ray"/>
    <property type="resolution" value="2.73 A"/>
    <property type="chains" value="A/E=75-116"/>
</dbReference>
<dbReference type="PDB" id="6BUZ">
    <property type="method" value="EM"/>
    <property type="resolution" value="3.92 A"/>
    <property type="chains" value="A/E=1-140"/>
</dbReference>
<dbReference type="PDB" id="6C0W">
    <property type="method" value="EM"/>
    <property type="resolution" value="4.00 A"/>
    <property type="chains" value="A/E=1-140"/>
</dbReference>
<dbReference type="PDB" id="6E0C">
    <property type="method" value="EM"/>
    <property type="resolution" value="2.63 A"/>
    <property type="chains" value="A/E=1-140"/>
</dbReference>
<dbReference type="PDB" id="6E0P">
    <property type="method" value="EM"/>
    <property type="resolution" value="2.60 A"/>
    <property type="chains" value="A/E=1-140"/>
</dbReference>
<dbReference type="PDB" id="6KDQ">
    <property type="method" value="X-ray"/>
    <property type="resolution" value="1.50 A"/>
    <property type="chains" value="E/F=2-8"/>
</dbReference>
<dbReference type="PDB" id="6KDS">
    <property type="method" value="X-ray"/>
    <property type="resolution" value="1.84 A"/>
    <property type="chains" value="E=2-7"/>
</dbReference>
<dbReference type="PDB" id="6L49">
    <property type="method" value="EM"/>
    <property type="resolution" value="18.90 A"/>
    <property type="chains" value="A/E=1-140"/>
</dbReference>
<dbReference type="PDB" id="6MUO">
    <property type="method" value="EM"/>
    <property type="resolution" value="3.60 A"/>
    <property type="chains" value="A/E=38-139"/>
</dbReference>
<dbReference type="PDB" id="6MUP">
    <property type="method" value="EM"/>
    <property type="resolution" value="3.50 A"/>
    <property type="chains" value="A/E=38-139"/>
</dbReference>
<dbReference type="PDB" id="6O1D">
    <property type="method" value="EM"/>
    <property type="resolution" value="3.40 A"/>
    <property type="chains" value="A/E=1-140"/>
</dbReference>
<dbReference type="PDB" id="6SE0">
    <property type="method" value="EM"/>
    <property type="resolution" value="3.80 A"/>
    <property type="chains" value="A/E=1-140"/>
</dbReference>
<dbReference type="PDB" id="6SE6">
    <property type="method" value="EM"/>
    <property type="resolution" value="3.50 A"/>
    <property type="chains" value="A/E=1-140"/>
</dbReference>
<dbReference type="PDB" id="6SEE">
    <property type="method" value="EM"/>
    <property type="resolution" value="4.20 A"/>
    <property type="chains" value="A/E=1-140"/>
</dbReference>
<dbReference type="PDB" id="6SEF">
    <property type="method" value="EM"/>
    <property type="resolution" value="3.70 A"/>
    <property type="chains" value="A/E=1-140"/>
</dbReference>
<dbReference type="PDB" id="6SEG">
    <property type="method" value="EM"/>
    <property type="resolution" value="3.10 A"/>
    <property type="chains" value="A/E=1-140"/>
</dbReference>
<dbReference type="PDB" id="6TEM">
    <property type="method" value="EM"/>
    <property type="resolution" value="3.90 A"/>
    <property type="chains" value="A/E=1-140"/>
</dbReference>
<dbReference type="PDB" id="7D20">
    <property type="method" value="EM"/>
    <property type="resolution" value="3.00 A"/>
    <property type="chains" value="A/E=1-140"/>
</dbReference>
<dbReference type="PDB" id="7PII">
    <property type="method" value="EM"/>
    <property type="resolution" value="2.68 A"/>
    <property type="chains" value="A/E=1-140"/>
</dbReference>
<dbReference type="PDB" id="7R5R">
    <property type="method" value="EM"/>
    <property type="resolution" value="2.44 A"/>
    <property type="chains" value="A/E=1-140"/>
</dbReference>
<dbReference type="PDB" id="7U46">
    <property type="method" value="EM"/>
    <property type="resolution" value="2.68 A"/>
    <property type="chains" value="A/E=1-140"/>
</dbReference>
<dbReference type="PDB" id="7U47">
    <property type="method" value="EM"/>
    <property type="resolution" value="7.50 A"/>
    <property type="chains" value="A/E/L/P=1-140"/>
</dbReference>
<dbReference type="PDB" id="7U4D">
    <property type="method" value="EM"/>
    <property type="resolution" value="8.10 A"/>
    <property type="chains" value="A/E/L/P=1-140"/>
</dbReference>
<dbReference type="PDB" id="7YWX">
    <property type="method" value="EM"/>
    <property type="resolution" value="12.00 A"/>
    <property type="chains" value="A/E=1-140"/>
</dbReference>
<dbReference type="PDB" id="7YYH">
    <property type="method" value="EM"/>
    <property type="resolution" value="8.90 A"/>
    <property type="chains" value="A/E=1-140"/>
</dbReference>
<dbReference type="PDB" id="9GXA">
    <property type="method" value="EM"/>
    <property type="resolution" value="4.01 A"/>
    <property type="chains" value="A/C/E/G=2-140"/>
</dbReference>
<dbReference type="PDBsum" id="3AN2"/>
<dbReference type="PDBsum" id="3NQJ"/>
<dbReference type="PDBsum" id="3NQU"/>
<dbReference type="PDBsum" id="3R45"/>
<dbReference type="PDBsum" id="3WTP"/>
<dbReference type="PDBsum" id="5CVD"/>
<dbReference type="PDBsum" id="5Z23"/>
<dbReference type="PDBsum" id="6BUZ"/>
<dbReference type="PDBsum" id="6C0W"/>
<dbReference type="PDBsum" id="6E0C"/>
<dbReference type="PDBsum" id="6E0P"/>
<dbReference type="PDBsum" id="6KDQ"/>
<dbReference type="PDBsum" id="6KDS"/>
<dbReference type="PDBsum" id="6L49"/>
<dbReference type="PDBsum" id="6MUO"/>
<dbReference type="PDBsum" id="6MUP"/>
<dbReference type="PDBsum" id="6O1D"/>
<dbReference type="PDBsum" id="6SE0"/>
<dbReference type="PDBsum" id="6SE6"/>
<dbReference type="PDBsum" id="6SEE"/>
<dbReference type="PDBsum" id="6SEF"/>
<dbReference type="PDBsum" id="6SEG"/>
<dbReference type="PDBsum" id="6TEM"/>
<dbReference type="PDBsum" id="7D20"/>
<dbReference type="PDBsum" id="7PII"/>
<dbReference type="PDBsum" id="7R5R"/>
<dbReference type="PDBsum" id="7U46"/>
<dbReference type="PDBsum" id="7U47"/>
<dbReference type="PDBsum" id="7U4D"/>
<dbReference type="PDBsum" id="7YWX"/>
<dbReference type="PDBsum" id="7YYH"/>
<dbReference type="PDBsum" id="9GXA"/>
<dbReference type="EMDB" id="EMD-0586"/>
<dbReference type="EMDB" id="EMD-10151"/>
<dbReference type="EMDB" id="EMD-10152"/>
<dbReference type="EMDB" id="EMD-10153"/>
<dbReference type="EMDB" id="EMD-10154"/>
<dbReference type="EMDB" id="EMD-10155"/>
<dbReference type="EMDB" id="EMD-13437"/>
<dbReference type="EMDB" id="EMD-14334"/>
<dbReference type="EMDB" id="EMD-14351"/>
<dbReference type="EMDB" id="EMD-14375"/>
<dbReference type="EMDB" id="EMD-26330"/>
<dbReference type="EMDB" id="EMD-26331"/>
<dbReference type="EMDB" id="EMD-26332"/>
<dbReference type="EMDB" id="EMD-30552"/>
<dbReference type="EMDB" id="EMD-51645"/>
<dbReference type="EMDB" id="EMD-51656"/>
<dbReference type="EMDB" id="EMD-7293"/>
<dbReference type="EMDB" id="EMD-7318"/>
<dbReference type="EMDB" id="EMD-7326"/>
<dbReference type="EMDB" id="EMD-8945"/>
<dbReference type="EMDB" id="EMD-8949"/>
<dbReference type="EMDB" id="EMD-9250"/>
<dbReference type="EMDB" id="EMD-9251"/>
<dbReference type="SMR" id="P49450"/>
<dbReference type="BioGRID" id="107487">
    <property type="interactions" value="374"/>
</dbReference>
<dbReference type="ComplexPortal" id="CPX-5647">
    <property type="entry name" value="CENP-A nucleosome complex"/>
</dbReference>
<dbReference type="CORUM" id="P49450"/>
<dbReference type="DIP" id="DIP-52297N"/>
<dbReference type="FunCoup" id="P49450">
    <property type="interactions" value="884"/>
</dbReference>
<dbReference type="IntAct" id="P49450">
    <property type="interactions" value="52"/>
</dbReference>
<dbReference type="STRING" id="9606.ENSP00000336868"/>
<dbReference type="GlyGen" id="P49450">
    <property type="glycosylation" value="2 sites"/>
</dbReference>
<dbReference type="iPTMnet" id="P49450"/>
<dbReference type="PhosphoSitePlus" id="P49450"/>
<dbReference type="BioMuta" id="CENPA"/>
<dbReference type="DMDM" id="1345726"/>
<dbReference type="jPOST" id="P49450"/>
<dbReference type="MassIVE" id="P49450"/>
<dbReference type="PaxDb" id="9606-ENSP00000336868"/>
<dbReference type="PeptideAtlas" id="P49450"/>
<dbReference type="ProteomicsDB" id="56013">
    <molecule id="P49450-1"/>
</dbReference>
<dbReference type="ProteomicsDB" id="56014">
    <molecule id="P49450-2"/>
</dbReference>
<dbReference type="Pumba" id="P49450"/>
<dbReference type="ABCD" id="P49450">
    <property type="antibodies" value="2 sequenced antibodies"/>
</dbReference>
<dbReference type="Antibodypedia" id="3643">
    <property type="antibodies" value="530 antibodies from 36 providers"/>
</dbReference>
<dbReference type="DNASU" id="1058"/>
<dbReference type="Ensembl" id="ENST00000233505.12">
    <molecule id="P49450-2"/>
    <property type="protein sequence ID" value="ENSP00000233505.8"/>
    <property type="gene ID" value="ENSG00000115163.15"/>
</dbReference>
<dbReference type="Ensembl" id="ENST00000335756.9">
    <molecule id="P49450-1"/>
    <property type="protein sequence ID" value="ENSP00000336868.4"/>
    <property type="gene ID" value="ENSG00000115163.15"/>
</dbReference>
<dbReference type="GeneID" id="1058"/>
<dbReference type="KEGG" id="hsa:1058"/>
<dbReference type="MANE-Select" id="ENST00000335756.9">
    <property type="protein sequence ID" value="ENSP00000336868.4"/>
    <property type="RefSeq nucleotide sequence ID" value="NM_001809.4"/>
    <property type="RefSeq protein sequence ID" value="NP_001800.1"/>
</dbReference>
<dbReference type="UCSC" id="uc002rhr.4">
    <molecule id="P49450-1"/>
    <property type="organism name" value="human"/>
</dbReference>
<dbReference type="AGR" id="HGNC:1851"/>
<dbReference type="CTD" id="1058"/>
<dbReference type="DisGeNET" id="1058"/>
<dbReference type="GeneCards" id="CENPA"/>
<dbReference type="HGNC" id="HGNC:1851">
    <property type="gene designation" value="CENPA"/>
</dbReference>
<dbReference type="HPA" id="ENSG00000115163">
    <property type="expression patterns" value="Tissue enhanced (lymphoid)"/>
</dbReference>
<dbReference type="MIM" id="117139">
    <property type="type" value="gene"/>
</dbReference>
<dbReference type="neXtProt" id="NX_P49450"/>
<dbReference type="OpenTargets" id="ENSG00000115163"/>
<dbReference type="PharmGKB" id="PA26396"/>
<dbReference type="VEuPathDB" id="HostDB:ENSG00000115163"/>
<dbReference type="eggNOG" id="KOG1745">
    <property type="taxonomic scope" value="Eukaryota"/>
</dbReference>
<dbReference type="GeneTree" id="ENSGT01130000278322"/>
<dbReference type="HOGENOM" id="CLU_078295_3_2_1"/>
<dbReference type="InParanoid" id="P49450"/>
<dbReference type="OMA" id="REICITF"/>
<dbReference type="OrthoDB" id="842664at2759"/>
<dbReference type="PAN-GO" id="P49450">
    <property type="GO annotations" value="1 GO annotation based on evolutionary models"/>
</dbReference>
<dbReference type="PhylomeDB" id="P49450"/>
<dbReference type="TreeFam" id="TF354293"/>
<dbReference type="PathwayCommons" id="P49450"/>
<dbReference type="Reactome" id="R-HSA-141444">
    <property type="pathway name" value="Amplification of signal from unattached kinetochores via a MAD2 inhibitory signal"/>
</dbReference>
<dbReference type="Reactome" id="R-HSA-2467813">
    <property type="pathway name" value="Separation of Sister Chromatids"/>
</dbReference>
<dbReference type="Reactome" id="R-HSA-2500257">
    <property type="pathway name" value="Resolution of Sister Chromatid Cohesion"/>
</dbReference>
<dbReference type="Reactome" id="R-HSA-5663220">
    <property type="pathway name" value="RHO GTPases Activate Formins"/>
</dbReference>
<dbReference type="Reactome" id="R-HSA-606279">
    <property type="pathway name" value="Deposition of new CENPA-containing nucleosomes at the centromere"/>
</dbReference>
<dbReference type="Reactome" id="R-HSA-68877">
    <property type="pathway name" value="Mitotic Prometaphase"/>
</dbReference>
<dbReference type="Reactome" id="R-HSA-9648025">
    <property type="pathway name" value="EML4 and NUDC in mitotic spindle formation"/>
</dbReference>
<dbReference type="SignaLink" id="P49450"/>
<dbReference type="SIGNOR" id="P49450"/>
<dbReference type="BioGRID-ORCS" id="1058">
    <property type="hits" value="681 hits in 1167 CRISPR screens"/>
</dbReference>
<dbReference type="CD-CODE" id="8C2F96ED">
    <property type="entry name" value="Centrosome"/>
</dbReference>
<dbReference type="CD-CODE" id="91857CE7">
    <property type="entry name" value="Nucleolus"/>
</dbReference>
<dbReference type="ChiTaRS" id="CENPA">
    <property type="organism name" value="human"/>
</dbReference>
<dbReference type="EvolutionaryTrace" id="P49450"/>
<dbReference type="GeneWiki" id="CENPA"/>
<dbReference type="GenomeRNAi" id="1058"/>
<dbReference type="Pharos" id="P49450">
    <property type="development level" value="Tbio"/>
</dbReference>
<dbReference type="PRO" id="PR:P49450"/>
<dbReference type="Proteomes" id="UP000005640">
    <property type="component" value="Chromosome 2"/>
</dbReference>
<dbReference type="RNAct" id="P49450">
    <property type="molecule type" value="protein"/>
</dbReference>
<dbReference type="Bgee" id="ENSG00000115163">
    <property type="expression patterns" value="Expressed in oocyte and 140 other cell types or tissues"/>
</dbReference>
<dbReference type="ExpressionAtlas" id="P49450">
    <property type="expression patterns" value="baseline and differential"/>
</dbReference>
<dbReference type="GO" id="GO:0043505">
    <property type="term" value="C:CENP-A containing nucleosome"/>
    <property type="evidence" value="ECO:0000314"/>
    <property type="project" value="BHF-UCL"/>
</dbReference>
<dbReference type="GO" id="GO:0000775">
    <property type="term" value="C:chromosome, centromeric region"/>
    <property type="evidence" value="ECO:0000314"/>
    <property type="project" value="UniProtKB"/>
</dbReference>
<dbReference type="GO" id="GO:0000779">
    <property type="term" value="C:condensed chromosome, centromeric region"/>
    <property type="evidence" value="ECO:0000314"/>
    <property type="project" value="BHF-UCL"/>
</dbReference>
<dbReference type="GO" id="GO:0005829">
    <property type="term" value="C:cytosol"/>
    <property type="evidence" value="ECO:0000304"/>
    <property type="project" value="Reactome"/>
</dbReference>
<dbReference type="GO" id="GO:0005654">
    <property type="term" value="C:nucleoplasm"/>
    <property type="evidence" value="ECO:0000314"/>
    <property type="project" value="HPA"/>
</dbReference>
<dbReference type="GO" id="GO:0000786">
    <property type="term" value="C:nucleosome"/>
    <property type="evidence" value="ECO:0000314"/>
    <property type="project" value="UniProtKB"/>
</dbReference>
<dbReference type="GO" id="GO:0005634">
    <property type="term" value="C:nucleus"/>
    <property type="evidence" value="ECO:0000314"/>
    <property type="project" value="UniProtKB"/>
</dbReference>
<dbReference type="GO" id="GO:0005721">
    <property type="term" value="C:pericentric heterochromatin"/>
    <property type="evidence" value="ECO:0007669"/>
    <property type="project" value="Ensembl"/>
</dbReference>
<dbReference type="GO" id="GO:0003682">
    <property type="term" value="F:chromatin binding"/>
    <property type="evidence" value="ECO:0000304"/>
    <property type="project" value="ProtInc"/>
</dbReference>
<dbReference type="GO" id="GO:0003677">
    <property type="term" value="F:DNA binding"/>
    <property type="evidence" value="ECO:0007669"/>
    <property type="project" value="UniProtKB-KW"/>
</dbReference>
<dbReference type="GO" id="GO:0046982">
    <property type="term" value="F:protein heterodimerization activity"/>
    <property type="evidence" value="ECO:0007669"/>
    <property type="project" value="InterPro"/>
</dbReference>
<dbReference type="GO" id="GO:0030527">
    <property type="term" value="F:structural constituent of chromatin"/>
    <property type="evidence" value="ECO:0007669"/>
    <property type="project" value="InterPro"/>
</dbReference>
<dbReference type="GO" id="GO:0034080">
    <property type="term" value="P:CENP-A containing chromatin assembly"/>
    <property type="evidence" value="ECO:0000314"/>
    <property type="project" value="BHF-UCL"/>
</dbReference>
<dbReference type="GO" id="GO:0000132">
    <property type="term" value="P:establishment of mitotic spindle orientation"/>
    <property type="evidence" value="ECO:0000315"/>
    <property type="project" value="UniProtKB"/>
</dbReference>
<dbReference type="GO" id="GO:0051382">
    <property type="term" value="P:kinetochore assembly"/>
    <property type="evidence" value="ECO:0000314"/>
    <property type="project" value="BHF-UCL"/>
</dbReference>
<dbReference type="GO" id="GO:0000281">
    <property type="term" value="P:mitotic cytokinesis"/>
    <property type="evidence" value="ECO:0000315"/>
    <property type="project" value="UniProtKB"/>
</dbReference>
<dbReference type="GO" id="GO:0061644">
    <property type="term" value="P:protein localization to CENP-A containing chromatin"/>
    <property type="evidence" value="ECO:0000303"/>
    <property type="project" value="ComplexPortal"/>
</dbReference>
<dbReference type="GO" id="GO:0071459">
    <property type="term" value="P:protein localization to chromosome, centromeric region"/>
    <property type="evidence" value="ECO:0000314"/>
    <property type="project" value="BHF-UCL"/>
</dbReference>
<dbReference type="CDD" id="cd22911">
    <property type="entry name" value="HFD_H3"/>
    <property type="match status" value="1"/>
</dbReference>
<dbReference type="FunFam" id="1.10.20.10:FF:000065">
    <property type="entry name" value="Histone H3-like centromeric protein A"/>
    <property type="match status" value="1"/>
</dbReference>
<dbReference type="Gene3D" id="1.10.20.10">
    <property type="entry name" value="Histone, subunit A"/>
    <property type="match status" value="1"/>
</dbReference>
<dbReference type="IDEAL" id="IID00272"/>
<dbReference type="InterPro" id="IPR009072">
    <property type="entry name" value="Histone-fold"/>
</dbReference>
<dbReference type="InterPro" id="IPR007125">
    <property type="entry name" value="Histone_H2A/H2B/H3"/>
</dbReference>
<dbReference type="InterPro" id="IPR000164">
    <property type="entry name" value="Histone_H3/CENP-A"/>
</dbReference>
<dbReference type="PANTHER" id="PTHR45810:SF14">
    <property type="entry name" value="CENTROMERE PROTEIN A"/>
    <property type="match status" value="1"/>
</dbReference>
<dbReference type="PANTHER" id="PTHR45810">
    <property type="entry name" value="HISTONE H3.2"/>
    <property type="match status" value="1"/>
</dbReference>
<dbReference type="Pfam" id="PF00125">
    <property type="entry name" value="Histone"/>
    <property type="match status" value="1"/>
</dbReference>
<dbReference type="PRINTS" id="PR00622">
    <property type="entry name" value="HISTONEH3"/>
</dbReference>
<dbReference type="SMART" id="SM00428">
    <property type="entry name" value="H3"/>
    <property type="match status" value="1"/>
</dbReference>
<dbReference type="SUPFAM" id="SSF47113">
    <property type="entry name" value="Histone-fold"/>
    <property type="match status" value="1"/>
</dbReference>
<dbReference type="PROSITE" id="PS00959">
    <property type="entry name" value="HISTONE_H3_2"/>
    <property type="match status" value="1"/>
</dbReference>